<evidence type="ECO:0000255" key="1">
    <source>
        <dbReference type="HAMAP-Rule" id="MF_01328"/>
    </source>
</evidence>
<evidence type="ECO:0000256" key="2">
    <source>
        <dbReference type="SAM" id="MobiDB-lite"/>
    </source>
</evidence>
<evidence type="ECO:0000305" key="3"/>
<gene>
    <name evidence="1" type="primary">rplD</name>
    <name type="ordered locus">gbs0059</name>
</gene>
<name>RL4_STRA3</name>
<protein>
    <recommendedName>
        <fullName evidence="1">Large ribosomal subunit protein uL4</fullName>
    </recommendedName>
    <alternativeName>
        <fullName evidence="3">50S ribosomal protein L4</fullName>
    </alternativeName>
</protein>
<comment type="function">
    <text evidence="1">One of the primary rRNA binding proteins, this protein initially binds near the 5'-end of the 23S rRNA. It is important during the early stages of 50S assembly. It makes multiple contacts with different domains of the 23S rRNA in the assembled 50S subunit and ribosome.</text>
</comment>
<comment type="function">
    <text evidence="1">Forms part of the polypeptide exit tunnel.</text>
</comment>
<comment type="subunit">
    <text evidence="1">Part of the 50S ribosomal subunit.</text>
</comment>
<comment type="similarity">
    <text evidence="1">Belongs to the universal ribosomal protein uL4 family.</text>
</comment>
<sequence>MANVKLFDQTGKEVSSVELNEAIFGIEPNESVVFDVVISQRASLRQGTHAVKNRSAVSGGGRKPWRQKGTGRARQGSIRSPQWRGGGVVFGPTPRSYGYKLPQKVRRLALKSVYSAKVAEDKFVAVENLSFAAPKTAEFASVLSALSIDSKVLVILEEGNEFAALSARNLPNVTVATATTASVLDIVNADKLLVTKEAISTIEGVLA</sequence>
<accession>Q8E7T7</accession>
<dbReference type="EMBL" id="AL766843">
    <property type="protein sequence ID" value="CAD45704.1"/>
    <property type="molecule type" value="Genomic_DNA"/>
</dbReference>
<dbReference type="RefSeq" id="WP_000024418.1">
    <property type="nucleotide sequence ID" value="NC_004368.1"/>
</dbReference>
<dbReference type="SMR" id="Q8E7T7"/>
<dbReference type="GeneID" id="66885019"/>
<dbReference type="KEGG" id="san:rplD"/>
<dbReference type="eggNOG" id="COG0088">
    <property type="taxonomic scope" value="Bacteria"/>
</dbReference>
<dbReference type="HOGENOM" id="CLU_041575_5_2_9"/>
<dbReference type="Proteomes" id="UP000000823">
    <property type="component" value="Chromosome"/>
</dbReference>
<dbReference type="GO" id="GO:1990904">
    <property type="term" value="C:ribonucleoprotein complex"/>
    <property type="evidence" value="ECO:0007669"/>
    <property type="project" value="UniProtKB-KW"/>
</dbReference>
<dbReference type="GO" id="GO:0005840">
    <property type="term" value="C:ribosome"/>
    <property type="evidence" value="ECO:0007669"/>
    <property type="project" value="UniProtKB-KW"/>
</dbReference>
<dbReference type="GO" id="GO:0019843">
    <property type="term" value="F:rRNA binding"/>
    <property type="evidence" value="ECO:0007669"/>
    <property type="project" value="UniProtKB-UniRule"/>
</dbReference>
<dbReference type="GO" id="GO:0003735">
    <property type="term" value="F:structural constituent of ribosome"/>
    <property type="evidence" value="ECO:0007669"/>
    <property type="project" value="InterPro"/>
</dbReference>
<dbReference type="GO" id="GO:0006412">
    <property type="term" value="P:translation"/>
    <property type="evidence" value="ECO:0007669"/>
    <property type="project" value="UniProtKB-UniRule"/>
</dbReference>
<dbReference type="FunFam" id="3.40.1370.10:FF:000003">
    <property type="entry name" value="50S ribosomal protein L4"/>
    <property type="match status" value="1"/>
</dbReference>
<dbReference type="Gene3D" id="3.40.1370.10">
    <property type="match status" value="1"/>
</dbReference>
<dbReference type="HAMAP" id="MF_01328_B">
    <property type="entry name" value="Ribosomal_uL4_B"/>
    <property type="match status" value="1"/>
</dbReference>
<dbReference type="InterPro" id="IPR002136">
    <property type="entry name" value="Ribosomal_uL4"/>
</dbReference>
<dbReference type="InterPro" id="IPR013005">
    <property type="entry name" value="Ribosomal_uL4-like"/>
</dbReference>
<dbReference type="InterPro" id="IPR023574">
    <property type="entry name" value="Ribosomal_uL4_dom_sf"/>
</dbReference>
<dbReference type="NCBIfam" id="TIGR03953">
    <property type="entry name" value="rplD_bact"/>
    <property type="match status" value="1"/>
</dbReference>
<dbReference type="PANTHER" id="PTHR10746">
    <property type="entry name" value="50S RIBOSOMAL PROTEIN L4"/>
    <property type="match status" value="1"/>
</dbReference>
<dbReference type="PANTHER" id="PTHR10746:SF6">
    <property type="entry name" value="LARGE RIBOSOMAL SUBUNIT PROTEIN UL4M"/>
    <property type="match status" value="1"/>
</dbReference>
<dbReference type="Pfam" id="PF00573">
    <property type="entry name" value="Ribosomal_L4"/>
    <property type="match status" value="1"/>
</dbReference>
<dbReference type="SUPFAM" id="SSF52166">
    <property type="entry name" value="Ribosomal protein L4"/>
    <property type="match status" value="1"/>
</dbReference>
<feature type="chain" id="PRO_0000129284" description="Large ribosomal subunit protein uL4">
    <location>
        <begin position="1"/>
        <end position="207"/>
    </location>
</feature>
<feature type="region of interest" description="Disordered" evidence="2">
    <location>
        <begin position="49"/>
        <end position="78"/>
    </location>
</feature>
<organism>
    <name type="scientific">Streptococcus agalactiae serotype III (strain NEM316)</name>
    <dbReference type="NCBI Taxonomy" id="211110"/>
    <lineage>
        <taxon>Bacteria</taxon>
        <taxon>Bacillati</taxon>
        <taxon>Bacillota</taxon>
        <taxon>Bacilli</taxon>
        <taxon>Lactobacillales</taxon>
        <taxon>Streptococcaceae</taxon>
        <taxon>Streptococcus</taxon>
    </lineage>
</organism>
<keyword id="KW-0687">Ribonucleoprotein</keyword>
<keyword id="KW-0689">Ribosomal protein</keyword>
<keyword id="KW-0694">RNA-binding</keyword>
<keyword id="KW-0699">rRNA-binding</keyword>
<proteinExistence type="inferred from homology"/>
<reference key="1">
    <citation type="journal article" date="2002" name="Mol. Microbiol.">
        <title>Genome sequence of Streptococcus agalactiae, a pathogen causing invasive neonatal disease.</title>
        <authorList>
            <person name="Glaser P."/>
            <person name="Rusniok C."/>
            <person name="Buchrieser C."/>
            <person name="Chevalier F."/>
            <person name="Frangeul L."/>
            <person name="Msadek T."/>
            <person name="Zouine M."/>
            <person name="Couve E."/>
            <person name="Lalioui L."/>
            <person name="Poyart C."/>
            <person name="Trieu-Cuot P."/>
            <person name="Kunst F."/>
        </authorList>
    </citation>
    <scope>NUCLEOTIDE SEQUENCE [LARGE SCALE GENOMIC DNA]</scope>
    <source>
        <strain>NEM316</strain>
    </source>
</reference>